<reference key="1">
    <citation type="journal article" date="2001" name="Virology">
        <title>Analysis of the first complete DNA sequence of an invertebrate iridovirus: coding strategy of the genome of Chilo iridescent virus.</title>
        <authorList>
            <person name="Jakob N.J."/>
            <person name="Mueller K."/>
            <person name="Bahr U."/>
            <person name="Darai G."/>
        </authorList>
    </citation>
    <scope>NUCLEOTIDE SEQUENCE [LARGE SCALE GENOMIC DNA]</scope>
</reference>
<reference key="2">
    <citation type="journal article" date="2007" name="Virol. J.">
        <title>Comparative genomic analysis of the family Iridoviridae: re-annotating and defining the core set of iridovirus genes.</title>
        <authorList>
            <person name="Eaton H.E."/>
            <person name="Metcalf J."/>
            <person name="Penny E."/>
            <person name="Tcherepanov V."/>
            <person name="Upton C."/>
            <person name="Brunetti C.R."/>
        </authorList>
    </citation>
    <scope>GENOME REANNOTATION</scope>
</reference>
<evidence type="ECO:0000256" key="1">
    <source>
        <dbReference type="SAM" id="MobiDB-lite"/>
    </source>
</evidence>
<organism>
    <name type="scientific">Invertebrate iridescent virus 6</name>
    <name type="common">IIV-6</name>
    <name type="synonym">Chilo iridescent virus</name>
    <dbReference type="NCBI Taxonomy" id="176652"/>
    <lineage>
        <taxon>Viruses</taxon>
        <taxon>Varidnaviria</taxon>
        <taxon>Bamfordvirae</taxon>
        <taxon>Nucleocytoviricota</taxon>
        <taxon>Megaviricetes</taxon>
        <taxon>Pimascovirales</taxon>
        <taxon>Iridoviridae</taxon>
        <taxon>Betairidovirinae</taxon>
        <taxon>Iridovirus</taxon>
    </lineage>
</organism>
<keyword id="KW-1185">Reference proteome</keyword>
<sequence length="336" mass="38500">MNQEMNYENTEMEQPTVVFPPENAELFDFDSDDNRTSAKTPALKAIGGGIKDKNGKVIGAGLWMAHENAEICQWKKDCTDTCDYSCMDHLKGMTPHGVDTKKVDDDGNDIIIPGSVILKPRMLVIGRSPLLKISEDSGYTVGVWVKGDNRFKGPDGKKNLYACVRRYFIIFLDEANKPLHDISQPIQLTARGYFQMEFDKMLMFFRSTMIKAYCEAMKKNATNMKEAWHSMCVFAPLFKSEMKGPSKDKQSKACITYGFDKPTKDNWLTMCVGRNKEAQDIYKIHVENKEWWQKSIKKDLQKSEEEEHPNDDHVYMTEEDDMEKIERGIESLGNGH</sequence>
<accession>Q91FR8</accession>
<organismHost>
    <name type="scientific">Acheta domesticus</name>
    <name type="common">House cricket</name>
    <dbReference type="NCBI Taxonomy" id="6997"/>
</organismHost>
<organismHost>
    <name type="scientific">Chilo suppressalis</name>
    <name type="common">Asiatic rice borer moth</name>
    <dbReference type="NCBI Taxonomy" id="168631"/>
</organismHost>
<organismHost>
    <name type="scientific">Gryllus bimaculatus</name>
    <name type="common">Two-spotted cricket</name>
    <dbReference type="NCBI Taxonomy" id="6999"/>
</organismHost>
<organismHost>
    <name type="scientific">Gryllus campestris</name>
    <dbReference type="NCBI Taxonomy" id="58607"/>
</organismHost>
<organismHost>
    <name type="scientific">Spodoptera frugiperda</name>
    <name type="common">Fall armyworm</name>
    <dbReference type="NCBI Taxonomy" id="7108"/>
</organismHost>
<protein>
    <recommendedName>
        <fullName>Uncharacterized protein 254L</fullName>
    </recommendedName>
</protein>
<name>254L_IIV6</name>
<dbReference type="EMBL" id="AF303741">
    <property type="protein sequence ID" value="AAK82115.1"/>
    <property type="molecule type" value="Genomic_DNA"/>
</dbReference>
<dbReference type="RefSeq" id="NP_149717.1">
    <property type="nucleotide sequence ID" value="NC_003038.1"/>
</dbReference>
<dbReference type="KEGG" id="vg:1732979"/>
<dbReference type="OrthoDB" id="18190at10239"/>
<dbReference type="Proteomes" id="UP000001359">
    <property type="component" value="Genome"/>
</dbReference>
<dbReference type="InterPro" id="IPR045414">
    <property type="entry name" value="DUF5895"/>
</dbReference>
<dbReference type="Pfam" id="PF19247">
    <property type="entry name" value="DUF5895"/>
    <property type="match status" value="1"/>
</dbReference>
<proteinExistence type="predicted"/>
<gene>
    <name type="ORF">IIV6-254L</name>
</gene>
<feature type="chain" id="PRO_0000377834" description="Uncharacterized protein 254L">
    <location>
        <begin position="1"/>
        <end position="336"/>
    </location>
</feature>
<feature type="region of interest" description="Disordered" evidence="1">
    <location>
        <begin position="297"/>
        <end position="336"/>
    </location>
</feature>
<feature type="compositionally biased region" description="Basic and acidic residues" evidence="1">
    <location>
        <begin position="297"/>
        <end position="316"/>
    </location>
</feature>